<gene>
    <name type="primary">acnA</name>
    <name type="ordered locus">RC1233</name>
</gene>
<reference key="1">
    <citation type="journal article" date="2001" name="Science">
        <title>Mechanisms of evolution in Rickettsia conorii and R. prowazekii.</title>
        <authorList>
            <person name="Ogata H."/>
            <person name="Audic S."/>
            <person name="Renesto-Audiffren P."/>
            <person name="Fournier P.-E."/>
            <person name="Barbe V."/>
            <person name="Samson D."/>
            <person name="Roux V."/>
            <person name="Cossart P."/>
            <person name="Weissenbach J."/>
            <person name="Claverie J.-M."/>
            <person name="Raoult D."/>
        </authorList>
    </citation>
    <scope>NUCLEOTIDE SEQUENCE [LARGE SCALE GENOMIC DNA]</scope>
    <source>
        <strain>ATCC VR-613 / Malish 7</strain>
    </source>
</reference>
<evidence type="ECO:0000250" key="1">
    <source>
        <dbReference type="UniProtKB" id="P09339"/>
    </source>
</evidence>
<evidence type="ECO:0000250" key="2">
    <source>
        <dbReference type="UniProtKB" id="P36683"/>
    </source>
</evidence>
<evidence type="ECO:0000250" key="3">
    <source>
        <dbReference type="UniProtKB" id="Q8ZP52"/>
    </source>
</evidence>
<evidence type="ECO:0000305" key="4"/>
<sequence length="878" mass="96900">MSKVHNSEYIQELSVDNTSYKIYDINKAASDIDLPLKKLPYSLRVLFENVLRSNGSKQSLLVFKEWLKTKKSDAEIDFMPARVLMQDFTGVPAIVDLAAMRDAMKKIGGDPLKINPLIPVDLVIDHSVSVDSYAAKDSFNKNVQMEMKRNIERYAFLKWGQQAFNNFKVVPPGTGICHQVNLEYLAKVVWHKDGTLYPDSLVGTDSHTTMVNGLSVLGWGVGGIEAEAAMLGQPLTMILPEVIGVKLTGKLTGIATATDLVLTVTEMLRKKKVVGKFVEFFGEGLKNLMIADRATISNMSPEYGATCGFFPIDQETIKYLELTGREKTQIRLVEQYATEQNLWYDFEHAVEYTEVLELDLSMVHGSLAGPKRPQDRVNLNDVASNFKYELPNFALDNKDIDKKYAVANQNYEIGNGDVVIAAITSCTNTSNPSVMIGAALLAKKALEHGLKVKPWVKTSLAPGSKVVTEYLKLSGLDKYLDELGFNLVGYGCTTCIGNSGPLNPEIEETINKNGLVVASVLSGNRNFEGRINPLTKASYLGSPILVVAYALSGTLNIDLTNMPIGENIYLKDLWPSKEEIDEVIANSINSSMFIEKYSDIFSGTKEWKDLQVTNSSTYNWNKNSTYINNPPYFKDIGSKNNIQDIKSAKILAILGDSITTDHISPAGSISKTSPAAKYLTDHHIEPLDFNSYGSRRGNHEVMMRGTFANIRIKNEMCKGVEGGFTINQLNGTQQTIYDAAMDYKAHDVSVVIFAGKEYGSGSSRDWAAKGPGLLGVKAVIAESFERIHRSNLVGMGILPLTFTGNNTRLDLKLDGSETIDITGLSENISSYHPVKCVIKKQTGAIRTIDLILQIFTDNEINYIKHGSIMHFVVESLKG</sequence>
<name>ACNA_RICCN</name>
<protein>
    <recommendedName>
        <fullName evidence="3">Aconitate hydratase A</fullName>
        <shortName evidence="3">ACN</shortName>
        <shortName evidence="3">Aconitase</shortName>
        <ecNumber evidence="3">4.2.1.3</ecNumber>
    </recommendedName>
    <alternativeName>
        <fullName evidence="3">(2R,3S)-2-methylisocitrate dehydratase</fullName>
    </alternativeName>
    <alternativeName>
        <fullName evidence="3">(2S,3R)-3-hydroxybutane-1,2,3-tricarboxylate dehydratase</fullName>
    </alternativeName>
    <alternativeName>
        <fullName evidence="1">Iron-responsive protein-like</fullName>
        <shortName evidence="1">IRP-like</shortName>
    </alternativeName>
    <alternativeName>
        <fullName evidence="3">Probable 2-methyl-cis-aconitate hydratase</fullName>
        <ecNumber evidence="3">4.2.1.99</ecNumber>
    </alternativeName>
    <alternativeName>
        <fullName evidence="1">RNA-binding protein</fullName>
    </alternativeName>
</protein>
<feature type="chain" id="PRO_0000076664" description="Aconitate hydratase A">
    <location>
        <begin position="1"/>
        <end position="878"/>
    </location>
</feature>
<feature type="binding site" evidence="2">
    <location>
        <position position="426"/>
    </location>
    <ligand>
        <name>[4Fe-4S] cluster</name>
        <dbReference type="ChEBI" id="CHEBI:49883"/>
    </ligand>
</feature>
<feature type="binding site" evidence="2">
    <location>
        <position position="492"/>
    </location>
    <ligand>
        <name>[4Fe-4S] cluster</name>
        <dbReference type="ChEBI" id="CHEBI:49883"/>
    </ligand>
</feature>
<feature type="binding site" evidence="2">
    <location>
        <position position="495"/>
    </location>
    <ligand>
        <name>[4Fe-4S] cluster</name>
        <dbReference type="ChEBI" id="CHEBI:49883"/>
    </ligand>
</feature>
<organism>
    <name type="scientific">Rickettsia conorii (strain ATCC VR-613 / Malish 7)</name>
    <dbReference type="NCBI Taxonomy" id="272944"/>
    <lineage>
        <taxon>Bacteria</taxon>
        <taxon>Pseudomonadati</taxon>
        <taxon>Pseudomonadota</taxon>
        <taxon>Alphaproteobacteria</taxon>
        <taxon>Rickettsiales</taxon>
        <taxon>Rickettsiaceae</taxon>
        <taxon>Rickettsieae</taxon>
        <taxon>Rickettsia</taxon>
        <taxon>spotted fever group</taxon>
    </lineage>
</organism>
<proteinExistence type="inferred from homology"/>
<accession>Q92G90</accession>
<dbReference type="EC" id="4.2.1.3" evidence="3"/>
<dbReference type="EC" id="4.2.1.99" evidence="3"/>
<dbReference type="EMBL" id="AE006914">
    <property type="protein sequence ID" value="AAL03771.1"/>
    <property type="molecule type" value="Genomic_DNA"/>
</dbReference>
<dbReference type="PIR" id="A97854">
    <property type="entry name" value="A97854"/>
</dbReference>
<dbReference type="RefSeq" id="WP_010977798.1">
    <property type="nucleotide sequence ID" value="NC_003103.1"/>
</dbReference>
<dbReference type="SMR" id="Q92G90"/>
<dbReference type="GeneID" id="928381"/>
<dbReference type="KEGG" id="rco:RC1233"/>
<dbReference type="PATRIC" id="fig|272944.4.peg.1413"/>
<dbReference type="HOGENOM" id="CLU_013476_2_1_5"/>
<dbReference type="UniPathway" id="UPA00223">
    <property type="reaction ID" value="UER00718"/>
</dbReference>
<dbReference type="UniPathway" id="UPA00946"/>
<dbReference type="Proteomes" id="UP000000816">
    <property type="component" value="Chromosome"/>
</dbReference>
<dbReference type="GO" id="GO:0047456">
    <property type="term" value="F:2-methylisocitrate dehydratase activity"/>
    <property type="evidence" value="ECO:0000250"/>
    <property type="project" value="UniProtKB"/>
</dbReference>
<dbReference type="GO" id="GO:0051539">
    <property type="term" value="F:4 iron, 4 sulfur cluster binding"/>
    <property type="evidence" value="ECO:0000250"/>
    <property type="project" value="UniProtKB"/>
</dbReference>
<dbReference type="GO" id="GO:0003994">
    <property type="term" value="F:aconitate hydratase activity"/>
    <property type="evidence" value="ECO:0000250"/>
    <property type="project" value="UniProtKB"/>
</dbReference>
<dbReference type="GO" id="GO:0046872">
    <property type="term" value="F:metal ion binding"/>
    <property type="evidence" value="ECO:0007669"/>
    <property type="project" value="UniProtKB-KW"/>
</dbReference>
<dbReference type="GO" id="GO:0003730">
    <property type="term" value="F:mRNA 3'-UTR binding"/>
    <property type="evidence" value="ECO:0000250"/>
    <property type="project" value="UniProtKB"/>
</dbReference>
<dbReference type="GO" id="GO:0003729">
    <property type="term" value="F:mRNA binding"/>
    <property type="evidence" value="ECO:0000250"/>
    <property type="project" value="UniProtKB"/>
</dbReference>
<dbReference type="GO" id="GO:0019679">
    <property type="term" value="P:propionate metabolic process, methylcitrate cycle"/>
    <property type="evidence" value="ECO:0000250"/>
    <property type="project" value="UniProtKB"/>
</dbReference>
<dbReference type="GO" id="GO:0006099">
    <property type="term" value="P:tricarboxylic acid cycle"/>
    <property type="evidence" value="ECO:0000250"/>
    <property type="project" value="UniProtKB"/>
</dbReference>
<dbReference type="CDD" id="cd01586">
    <property type="entry name" value="AcnA_IRP"/>
    <property type="match status" value="1"/>
</dbReference>
<dbReference type="CDD" id="cd01580">
    <property type="entry name" value="AcnA_IRP_Swivel"/>
    <property type="match status" value="1"/>
</dbReference>
<dbReference type="FunFam" id="3.20.19.10:FF:000001">
    <property type="entry name" value="Aconitate hydratase"/>
    <property type="match status" value="1"/>
</dbReference>
<dbReference type="FunFam" id="3.30.499.10:FF:000002">
    <property type="entry name" value="Aconitate hydratase"/>
    <property type="match status" value="1"/>
</dbReference>
<dbReference type="FunFam" id="3.30.499.10:FF:000020">
    <property type="entry name" value="Aconitate hydratase A"/>
    <property type="match status" value="1"/>
</dbReference>
<dbReference type="Gene3D" id="6.10.190.10">
    <property type="match status" value="1"/>
</dbReference>
<dbReference type="Gene3D" id="3.30.499.10">
    <property type="entry name" value="Aconitase, domain 3"/>
    <property type="match status" value="2"/>
</dbReference>
<dbReference type="Gene3D" id="3.20.19.10">
    <property type="entry name" value="Aconitase, domain 4"/>
    <property type="match status" value="1"/>
</dbReference>
<dbReference type="InterPro" id="IPR044137">
    <property type="entry name" value="AcnA_IRP_Swivel"/>
</dbReference>
<dbReference type="InterPro" id="IPR015931">
    <property type="entry name" value="Acnase/IPM_dHydase_lsu_aba_1/3"/>
</dbReference>
<dbReference type="InterPro" id="IPR001030">
    <property type="entry name" value="Acoase/IPM_deHydtase_lsu_aba"/>
</dbReference>
<dbReference type="InterPro" id="IPR015928">
    <property type="entry name" value="Aconitase/3IPM_dehydase_swvl"/>
</dbReference>
<dbReference type="InterPro" id="IPR006249">
    <property type="entry name" value="Aconitase/IRP2"/>
</dbReference>
<dbReference type="InterPro" id="IPR018136">
    <property type="entry name" value="Aconitase_4Fe-4S_BS"/>
</dbReference>
<dbReference type="InterPro" id="IPR036008">
    <property type="entry name" value="Aconitase_4Fe-4S_dom"/>
</dbReference>
<dbReference type="InterPro" id="IPR000573">
    <property type="entry name" value="AconitaseA/IPMdHydase_ssu_swvl"/>
</dbReference>
<dbReference type="NCBIfam" id="TIGR01341">
    <property type="entry name" value="aconitase_1"/>
    <property type="match status" value="1"/>
</dbReference>
<dbReference type="NCBIfam" id="NF006757">
    <property type="entry name" value="PRK09277.1"/>
    <property type="match status" value="1"/>
</dbReference>
<dbReference type="NCBIfam" id="NF009520">
    <property type="entry name" value="PRK12881.1"/>
    <property type="match status" value="1"/>
</dbReference>
<dbReference type="PANTHER" id="PTHR11670">
    <property type="entry name" value="ACONITASE/IRON-RESPONSIVE ELEMENT FAMILY MEMBER"/>
    <property type="match status" value="1"/>
</dbReference>
<dbReference type="Pfam" id="PF00330">
    <property type="entry name" value="Aconitase"/>
    <property type="match status" value="1"/>
</dbReference>
<dbReference type="Pfam" id="PF00694">
    <property type="entry name" value="Aconitase_C"/>
    <property type="match status" value="1"/>
</dbReference>
<dbReference type="PRINTS" id="PR00415">
    <property type="entry name" value="ACONITASE"/>
</dbReference>
<dbReference type="SUPFAM" id="SSF53732">
    <property type="entry name" value="Aconitase iron-sulfur domain"/>
    <property type="match status" value="1"/>
</dbReference>
<dbReference type="SUPFAM" id="SSF52016">
    <property type="entry name" value="LeuD/IlvD-like"/>
    <property type="match status" value="1"/>
</dbReference>
<dbReference type="PROSITE" id="PS00450">
    <property type="entry name" value="ACONITASE_1"/>
    <property type="match status" value="1"/>
</dbReference>
<dbReference type="PROSITE" id="PS01244">
    <property type="entry name" value="ACONITASE_2"/>
    <property type="match status" value="1"/>
</dbReference>
<comment type="function">
    <text evidence="1 3">Involved in the catabolism of short chain fatty acids (SCFA) via the tricarboxylic acid (TCA)(acetyl degradation route) and probably the 2-methylcitrate cycle I (propionate degradation route). Catalyzes the reversible isomerization of citrate to isocitrate via cis-aconitate. Could catalyze the hydration of 2-methyl-cis-aconitate to yield (2R,3S)-2-methylisocitrate. The apo form of AcnA functions as a RNA-binding regulatory protein.</text>
</comment>
<comment type="catalytic activity">
    <reaction evidence="3">
        <text>citrate = D-threo-isocitrate</text>
        <dbReference type="Rhea" id="RHEA:10336"/>
        <dbReference type="ChEBI" id="CHEBI:15562"/>
        <dbReference type="ChEBI" id="CHEBI:16947"/>
        <dbReference type="EC" id="4.2.1.3"/>
    </reaction>
</comment>
<comment type="catalytic activity">
    <reaction evidence="3">
        <text>(2S,3R)-3-hydroxybutane-1,2,3-tricarboxylate = 2-methyl-cis-aconitate + H2O</text>
        <dbReference type="Rhea" id="RHEA:17941"/>
        <dbReference type="ChEBI" id="CHEBI:15377"/>
        <dbReference type="ChEBI" id="CHEBI:57429"/>
        <dbReference type="ChEBI" id="CHEBI:57872"/>
        <dbReference type="EC" id="4.2.1.99"/>
    </reaction>
</comment>
<comment type="cofactor">
    <cofactor evidence="1">
        <name>[4Fe-4S] cluster</name>
        <dbReference type="ChEBI" id="CHEBI:49883"/>
    </cofactor>
    <text evidence="1">Binds 1 [4Fe-4S] cluster per subunit.</text>
</comment>
<comment type="pathway">
    <text evidence="3">Carbohydrate metabolism; tricarboxylic acid cycle; isocitrate from oxaloacetate: step 2/2.</text>
</comment>
<comment type="pathway">
    <text evidence="3">Organic acid metabolism; propanoate degradation.</text>
</comment>
<comment type="subunit">
    <text evidence="1">Monomer.</text>
</comment>
<comment type="similarity">
    <text evidence="4">Belongs to the aconitase/IPM isomerase family.</text>
</comment>
<keyword id="KW-0004">4Fe-4S</keyword>
<keyword id="KW-0408">Iron</keyword>
<keyword id="KW-0411">Iron-sulfur</keyword>
<keyword id="KW-0456">Lyase</keyword>
<keyword id="KW-0479">Metal-binding</keyword>
<keyword id="KW-0694">RNA-binding</keyword>
<keyword id="KW-0816">Tricarboxylic acid cycle</keyword>